<keyword id="KW-0238">DNA-binding</keyword>
<keyword id="KW-1185">Reference proteome</keyword>
<feature type="chain" id="PRO_0000284564" description="DNA-binding protein Msp_0595">
    <location>
        <begin position="1"/>
        <end position="118"/>
    </location>
</feature>
<feature type="region of interest" description="Disordered" evidence="2">
    <location>
        <begin position="15"/>
        <end position="45"/>
    </location>
</feature>
<feature type="compositionally biased region" description="Low complexity" evidence="2">
    <location>
        <begin position="15"/>
        <end position="44"/>
    </location>
</feature>
<sequence length="118" mass="13930">MSDLDEIRRRRMEQLKQQQLAAQQQQGASLEQMQQEEQARQQFENQKKNALRQILTPEARQRLANLRLTKAELVNAIEMQLIQMAQAKRLQIPVTDATLKQILRETTSNKREIHITRK</sequence>
<gene>
    <name type="ordered locus">Msp_0595</name>
</gene>
<comment type="similarity">
    <text evidence="1">Belongs to the PDCD5 family.</text>
</comment>
<proteinExistence type="inferred from homology"/>
<evidence type="ECO:0000255" key="1">
    <source>
        <dbReference type="HAMAP-Rule" id="MF_00026"/>
    </source>
</evidence>
<evidence type="ECO:0000256" key="2">
    <source>
        <dbReference type="SAM" id="MobiDB-lite"/>
    </source>
</evidence>
<dbReference type="EMBL" id="CP000102">
    <property type="protein sequence ID" value="ABC56993.1"/>
    <property type="molecule type" value="Genomic_DNA"/>
</dbReference>
<dbReference type="RefSeq" id="WP_011406193.1">
    <property type="nucleotide sequence ID" value="NC_007681.1"/>
</dbReference>
<dbReference type="SMR" id="Q2NGR0"/>
<dbReference type="STRING" id="339860.Msp_0595"/>
<dbReference type="KEGG" id="mst:Msp_0595"/>
<dbReference type="eggNOG" id="arCOG04179">
    <property type="taxonomic scope" value="Archaea"/>
</dbReference>
<dbReference type="HOGENOM" id="CLU_122978_3_0_2"/>
<dbReference type="OrthoDB" id="7912at2157"/>
<dbReference type="Proteomes" id="UP000001931">
    <property type="component" value="Chromosome"/>
</dbReference>
<dbReference type="GO" id="GO:0005829">
    <property type="term" value="C:cytosol"/>
    <property type="evidence" value="ECO:0007669"/>
    <property type="project" value="TreeGrafter"/>
</dbReference>
<dbReference type="GO" id="GO:0003677">
    <property type="term" value="F:DNA binding"/>
    <property type="evidence" value="ECO:0007669"/>
    <property type="project" value="UniProtKB-UniRule"/>
</dbReference>
<dbReference type="Gene3D" id="1.10.8.140">
    <property type="entry name" value="PDCD5-like"/>
    <property type="match status" value="1"/>
</dbReference>
<dbReference type="HAMAP" id="MF_00026">
    <property type="entry name" value="dsDNA_bind"/>
    <property type="match status" value="1"/>
</dbReference>
<dbReference type="InterPro" id="IPR022889">
    <property type="entry name" value="DNA_bind_arc"/>
</dbReference>
<dbReference type="InterPro" id="IPR002836">
    <property type="entry name" value="PDCD5-like"/>
</dbReference>
<dbReference type="InterPro" id="IPR036883">
    <property type="entry name" value="PDCD5-like_sf"/>
</dbReference>
<dbReference type="NCBIfam" id="NF003268">
    <property type="entry name" value="PRK04239.1"/>
    <property type="match status" value="1"/>
</dbReference>
<dbReference type="PANTHER" id="PTHR10840">
    <property type="entry name" value="PROGRAMMED CELL DEATH PROTEIN 5"/>
    <property type="match status" value="1"/>
</dbReference>
<dbReference type="PANTHER" id="PTHR10840:SF0">
    <property type="entry name" value="PROGRAMMED CELL DEATH PROTEIN 5"/>
    <property type="match status" value="1"/>
</dbReference>
<dbReference type="Pfam" id="PF01984">
    <property type="entry name" value="dsDNA_bind"/>
    <property type="match status" value="1"/>
</dbReference>
<dbReference type="PIRSF" id="PIRSF015730">
    <property type="entry name" value="TFAR19"/>
    <property type="match status" value="1"/>
</dbReference>
<dbReference type="SUPFAM" id="SSF46950">
    <property type="entry name" value="Double-stranded DNA-binding domain"/>
    <property type="match status" value="1"/>
</dbReference>
<accession>Q2NGR0</accession>
<organism>
    <name type="scientific">Methanosphaera stadtmanae (strain ATCC 43021 / DSM 3091 / JCM 11832 / MCB-3)</name>
    <dbReference type="NCBI Taxonomy" id="339860"/>
    <lineage>
        <taxon>Archaea</taxon>
        <taxon>Methanobacteriati</taxon>
        <taxon>Methanobacteriota</taxon>
        <taxon>Methanomada group</taxon>
        <taxon>Methanobacteria</taxon>
        <taxon>Methanobacteriales</taxon>
        <taxon>Methanobacteriaceae</taxon>
        <taxon>Methanosphaera</taxon>
    </lineage>
</organism>
<name>Y595_METST</name>
<reference key="1">
    <citation type="journal article" date="2006" name="J. Bacteriol.">
        <title>The genome sequence of Methanosphaera stadtmanae reveals why this human intestinal archaeon is restricted to methanol and H2 for methane formation and ATP synthesis.</title>
        <authorList>
            <person name="Fricke W.F."/>
            <person name="Seedorf H."/>
            <person name="Henne A."/>
            <person name="Kruer M."/>
            <person name="Liesegang H."/>
            <person name="Hedderich R."/>
            <person name="Gottschalk G."/>
            <person name="Thauer R.K."/>
        </authorList>
    </citation>
    <scope>NUCLEOTIDE SEQUENCE [LARGE SCALE GENOMIC DNA]</scope>
    <source>
        <strain>ATCC 43021 / DSM 3091 / JCM 11832 / MCB-3</strain>
    </source>
</reference>
<protein>
    <recommendedName>
        <fullName evidence="1">DNA-binding protein Msp_0595</fullName>
    </recommendedName>
</protein>